<accession>B9L5T1</accession>
<gene>
    <name evidence="1" type="primary">rpmE</name>
    <name type="ordered locus">NAMH_1326</name>
</gene>
<organism>
    <name type="scientific">Nautilia profundicola (strain ATCC BAA-1463 / DSM 18972 / AmH)</name>
    <dbReference type="NCBI Taxonomy" id="598659"/>
    <lineage>
        <taxon>Bacteria</taxon>
        <taxon>Pseudomonadati</taxon>
        <taxon>Campylobacterota</taxon>
        <taxon>Epsilonproteobacteria</taxon>
        <taxon>Nautiliales</taxon>
        <taxon>Nautiliaceae</taxon>
        <taxon>Nautilia</taxon>
    </lineage>
</organism>
<sequence>MKKGIHPEYVKCQVKCTCGHEFEILSTKESLRVEVCDKCHPFYTGQERNIDRGGKVDKFKKKYGLA</sequence>
<reference key="1">
    <citation type="journal article" date="2009" name="PLoS Genet.">
        <title>Adaptations to submarine hydrothermal environments exemplified by the genome of Nautilia profundicola.</title>
        <authorList>
            <person name="Campbell B.J."/>
            <person name="Smith J.L."/>
            <person name="Hanson T.E."/>
            <person name="Klotz M.G."/>
            <person name="Stein L.Y."/>
            <person name="Lee C.K."/>
            <person name="Wu D."/>
            <person name="Robinson J.M."/>
            <person name="Khouri H.M."/>
            <person name="Eisen J.A."/>
            <person name="Cary S.C."/>
        </authorList>
    </citation>
    <scope>NUCLEOTIDE SEQUENCE [LARGE SCALE GENOMIC DNA]</scope>
    <source>
        <strain>ATCC BAA-1463 / DSM 18972 / AmH</strain>
    </source>
</reference>
<comment type="function">
    <text evidence="1">Binds the 23S rRNA.</text>
</comment>
<comment type="cofactor">
    <cofactor evidence="1">
        <name>Zn(2+)</name>
        <dbReference type="ChEBI" id="CHEBI:29105"/>
    </cofactor>
    <text evidence="1">Binds 1 zinc ion per subunit.</text>
</comment>
<comment type="subunit">
    <text evidence="1">Part of the 50S ribosomal subunit.</text>
</comment>
<comment type="similarity">
    <text evidence="1">Belongs to the bacterial ribosomal protein bL31 family. Type A subfamily.</text>
</comment>
<feature type="chain" id="PRO_1000176970" description="Large ribosomal subunit protein bL31">
    <location>
        <begin position="1"/>
        <end position="66"/>
    </location>
</feature>
<feature type="binding site" evidence="1">
    <location>
        <position position="16"/>
    </location>
    <ligand>
        <name>Zn(2+)</name>
        <dbReference type="ChEBI" id="CHEBI:29105"/>
    </ligand>
</feature>
<feature type="binding site" evidence="1">
    <location>
        <position position="18"/>
    </location>
    <ligand>
        <name>Zn(2+)</name>
        <dbReference type="ChEBI" id="CHEBI:29105"/>
    </ligand>
</feature>
<feature type="binding site" evidence="1">
    <location>
        <position position="36"/>
    </location>
    <ligand>
        <name>Zn(2+)</name>
        <dbReference type="ChEBI" id="CHEBI:29105"/>
    </ligand>
</feature>
<feature type="binding site" evidence="1">
    <location>
        <position position="39"/>
    </location>
    <ligand>
        <name>Zn(2+)</name>
        <dbReference type="ChEBI" id="CHEBI:29105"/>
    </ligand>
</feature>
<proteinExistence type="inferred from homology"/>
<name>RL31_NAUPA</name>
<dbReference type="EMBL" id="CP001279">
    <property type="protein sequence ID" value="ACM93530.1"/>
    <property type="molecule type" value="Genomic_DNA"/>
</dbReference>
<dbReference type="RefSeq" id="WP_015902582.1">
    <property type="nucleotide sequence ID" value="NC_012115.1"/>
</dbReference>
<dbReference type="SMR" id="B9L5T1"/>
<dbReference type="STRING" id="598659.NAMH_1326"/>
<dbReference type="KEGG" id="nam:NAMH_1326"/>
<dbReference type="eggNOG" id="COG0254">
    <property type="taxonomic scope" value="Bacteria"/>
</dbReference>
<dbReference type="HOGENOM" id="CLU_114306_4_3_7"/>
<dbReference type="OrthoDB" id="9803251at2"/>
<dbReference type="Proteomes" id="UP000000448">
    <property type="component" value="Chromosome"/>
</dbReference>
<dbReference type="GO" id="GO:1990904">
    <property type="term" value="C:ribonucleoprotein complex"/>
    <property type="evidence" value="ECO:0007669"/>
    <property type="project" value="UniProtKB-KW"/>
</dbReference>
<dbReference type="GO" id="GO:0005840">
    <property type="term" value="C:ribosome"/>
    <property type="evidence" value="ECO:0007669"/>
    <property type="project" value="UniProtKB-KW"/>
</dbReference>
<dbReference type="GO" id="GO:0046872">
    <property type="term" value="F:metal ion binding"/>
    <property type="evidence" value="ECO:0007669"/>
    <property type="project" value="UniProtKB-KW"/>
</dbReference>
<dbReference type="GO" id="GO:0019843">
    <property type="term" value="F:rRNA binding"/>
    <property type="evidence" value="ECO:0007669"/>
    <property type="project" value="UniProtKB-KW"/>
</dbReference>
<dbReference type="GO" id="GO:0003735">
    <property type="term" value="F:structural constituent of ribosome"/>
    <property type="evidence" value="ECO:0007669"/>
    <property type="project" value="InterPro"/>
</dbReference>
<dbReference type="GO" id="GO:0006412">
    <property type="term" value="P:translation"/>
    <property type="evidence" value="ECO:0007669"/>
    <property type="project" value="UniProtKB-UniRule"/>
</dbReference>
<dbReference type="Gene3D" id="4.10.830.30">
    <property type="entry name" value="Ribosomal protein L31"/>
    <property type="match status" value="1"/>
</dbReference>
<dbReference type="HAMAP" id="MF_00501">
    <property type="entry name" value="Ribosomal_bL31_1"/>
    <property type="match status" value="1"/>
</dbReference>
<dbReference type="InterPro" id="IPR034704">
    <property type="entry name" value="Ribosomal_bL28/bL31-like_sf"/>
</dbReference>
<dbReference type="InterPro" id="IPR002150">
    <property type="entry name" value="Ribosomal_bL31"/>
</dbReference>
<dbReference type="InterPro" id="IPR027491">
    <property type="entry name" value="Ribosomal_bL31_A"/>
</dbReference>
<dbReference type="InterPro" id="IPR042105">
    <property type="entry name" value="Ribosomal_bL31_sf"/>
</dbReference>
<dbReference type="NCBIfam" id="TIGR00105">
    <property type="entry name" value="L31"/>
    <property type="match status" value="1"/>
</dbReference>
<dbReference type="NCBIfam" id="NF000612">
    <property type="entry name" value="PRK00019.1"/>
    <property type="match status" value="1"/>
</dbReference>
<dbReference type="NCBIfam" id="NF001809">
    <property type="entry name" value="PRK00528.1"/>
    <property type="match status" value="1"/>
</dbReference>
<dbReference type="PANTHER" id="PTHR33280">
    <property type="entry name" value="50S RIBOSOMAL PROTEIN L31, CHLOROPLASTIC"/>
    <property type="match status" value="1"/>
</dbReference>
<dbReference type="PANTHER" id="PTHR33280:SF1">
    <property type="entry name" value="LARGE RIBOSOMAL SUBUNIT PROTEIN BL31C"/>
    <property type="match status" value="1"/>
</dbReference>
<dbReference type="Pfam" id="PF01197">
    <property type="entry name" value="Ribosomal_L31"/>
    <property type="match status" value="1"/>
</dbReference>
<dbReference type="PRINTS" id="PR01249">
    <property type="entry name" value="RIBOSOMALL31"/>
</dbReference>
<dbReference type="SUPFAM" id="SSF143800">
    <property type="entry name" value="L28p-like"/>
    <property type="match status" value="1"/>
</dbReference>
<dbReference type="PROSITE" id="PS01143">
    <property type="entry name" value="RIBOSOMAL_L31"/>
    <property type="match status" value="1"/>
</dbReference>
<protein>
    <recommendedName>
        <fullName evidence="1">Large ribosomal subunit protein bL31</fullName>
    </recommendedName>
    <alternativeName>
        <fullName evidence="2">50S ribosomal protein L31</fullName>
    </alternativeName>
</protein>
<evidence type="ECO:0000255" key="1">
    <source>
        <dbReference type="HAMAP-Rule" id="MF_00501"/>
    </source>
</evidence>
<evidence type="ECO:0000305" key="2"/>
<keyword id="KW-0479">Metal-binding</keyword>
<keyword id="KW-0687">Ribonucleoprotein</keyword>
<keyword id="KW-0689">Ribosomal protein</keyword>
<keyword id="KW-0694">RNA-binding</keyword>
<keyword id="KW-0699">rRNA-binding</keyword>
<keyword id="KW-0862">Zinc</keyword>